<organism>
    <name type="scientific">Bacillus subtilis (strain 168)</name>
    <dbReference type="NCBI Taxonomy" id="224308"/>
    <lineage>
        <taxon>Bacteria</taxon>
        <taxon>Bacillati</taxon>
        <taxon>Bacillota</taxon>
        <taxon>Bacilli</taxon>
        <taxon>Bacillales</taxon>
        <taxon>Bacillaceae</taxon>
        <taxon>Bacillus</taxon>
    </lineage>
</organism>
<reference key="1">
    <citation type="journal article" date="1992" name="J. Biol. Chem.">
        <title>Molecular cloning, sequencing, and physiological characterization of the qox operon from Bacillus subtilis encoding the aa3-600 quinol oxidase.</title>
        <authorList>
            <person name="Santana M."/>
            <person name="Kunst F."/>
            <person name="Hullo M.-F."/>
            <person name="Rapoport G."/>
            <person name="Danchin A."/>
            <person name="Glaser P."/>
        </authorList>
    </citation>
    <scope>NUCLEOTIDE SEQUENCE [GENOMIC DNA]</scope>
    <source>
        <strain>168</strain>
    </source>
</reference>
<reference key="2">
    <citation type="journal article" date="1993" name="Mol. Microbiol.">
        <title>Bacillus subtilis genome project: cloning and sequencing of the 97 kb region from 325 degrees to 333 degrees.</title>
        <authorList>
            <person name="Glaser P."/>
            <person name="Kunst F."/>
            <person name="Arnaud M."/>
            <person name="Coudart M.P."/>
            <person name="Gonzales W."/>
            <person name="Hullo M.-F."/>
            <person name="Ionescu M."/>
            <person name="Lubochinsky B."/>
            <person name="Marcelino L."/>
            <person name="Moszer I."/>
            <person name="Presecan E."/>
            <person name="Santana M."/>
            <person name="Schneider E."/>
            <person name="Schweizer J."/>
            <person name="Vertes A."/>
            <person name="Rapoport G."/>
            <person name="Danchin A."/>
        </authorList>
    </citation>
    <scope>NUCLEOTIDE SEQUENCE [GENOMIC DNA]</scope>
    <source>
        <strain>168</strain>
    </source>
</reference>
<reference key="3">
    <citation type="journal article" date="1997" name="Nature">
        <title>The complete genome sequence of the Gram-positive bacterium Bacillus subtilis.</title>
        <authorList>
            <person name="Kunst F."/>
            <person name="Ogasawara N."/>
            <person name="Moszer I."/>
            <person name="Albertini A.M."/>
            <person name="Alloni G."/>
            <person name="Azevedo V."/>
            <person name="Bertero M.G."/>
            <person name="Bessieres P."/>
            <person name="Bolotin A."/>
            <person name="Borchert S."/>
            <person name="Borriss R."/>
            <person name="Boursier L."/>
            <person name="Brans A."/>
            <person name="Braun M."/>
            <person name="Brignell S.C."/>
            <person name="Bron S."/>
            <person name="Brouillet S."/>
            <person name="Bruschi C.V."/>
            <person name="Caldwell B."/>
            <person name="Capuano V."/>
            <person name="Carter N.M."/>
            <person name="Choi S.-K."/>
            <person name="Codani J.-J."/>
            <person name="Connerton I.F."/>
            <person name="Cummings N.J."/>
            <person name="Daniel R.A."/>
            <person name="Denizot F."/>
            <person name="Devine K.M."/>
            <person name="Duesterhoeft A."/>
            <person name="Ehrlich S.D."/>
            <person name="Emmerson P.T."/>
            <person name="Entian K.-D."/>
            <person name="Errington J."/>
            <person name="Fabret C."/>
            <person name="Ferrari E."/>
            <person name="Foulger D."/>
            <person name="Fritz C."/>
            <person name="Fujita M."/>
            <person name="Fujita Y."/>
            <person name="Fuma S."/>
            <person name="Galizzi A."/>
            <person name="Galleron N."/>
            <person name="Ghim S.-Y."/>
            <person name="Glaser P."/>
            <person name="Goffeau A."/>
            <person name="Golightly E.J."/>
            <person name="Grandi G."/>
            <person name="Guiseppi G."/>
            <person name="Guy B.J."/>
            <person name="Haga K."/>
            <person name="Haiech J."/>
            <person name="Harwood C.R."/>
            <person name="Henaut A."/>
            <person name="Hilbert H."/>
            <person name="Holsappel S."/>
            <person name="Hosono S."/>
            <person name="Hullo M.-F."/>
            <person name="Itaya M."/>
            <person name="Jones L.-M."/>
            <person name="Joris B."/>
            <person name="Karamata D."/>
            <person name="Kasahara Y."/>
            <person name="Klaerr-Blanchard M."/>
            <person name="Klein C."/>
            <person name="Kobayashi Y."/>
            <person name="Koetter P."/>
            <person name="Koningstein G."/>
            <person name="Krogh S."/>
            <person name="Kumano M."/>
            <person name="Kurita K."/>
            <person name="Lapidus A."/>
            <person name="Lardinois S."/>
            <person name="Lauber J."/>
            <person name="Lazarevic V."/>
            <person name="Lee S.-M."/>
            <person name="Levine A."/>
            <person name="Liu H."/>
            <person name="Masuda S."/>
            <person name="Mauel C."/>
            <person name="Medigue C."/>
            <person name="Medina N."/>
            <person name="Mellado R.P."/>
            <person name="Mizuno M."/>
            <person name="Moestl D."/>
            <person name="Nakai S."/>
            <person name="Noback M."/>
            <person name="Noone D."/>
            <person name="O'Reilly M."/>
            <person name="Ogawa K."/>
            <person name="Ogiwara A."/>
            <person name="Oudega B."/>
            <person name="Park S.-H."/>
            <person name="Parro V."/>
            <person name="Pohl T.M."/>
            <person name="Portetelle D."/>
            <person name="Porwollik S."/>
            <person name="Prescott A.M."/>
            <person name="Presecan E."/>
            <person name="Pujic P."/>
            <person name="Purnelle B."/>
            <person name="Rapoport G."/>
            <person name="Rey M."/>
            <person name="Reynolds S."/>
            <person name="Rieger M."/>
            <person name="Rivolta C."/>
            <person name="Rocha E."/>
            <person name="Roche B."/>
            <person name="Rose M."/>
            <person name="Sadaie Y."/>
            <person name="Sato T."/>
            <person name="Scanlan E."/>
            <person name="Schleich S."/>
            <person name="Schroeter R."/>
            <person name="Scoffone F."/>
            <person name="Sekiguchi J."/>
            <person name="Sekowska A."/>
            <person name="Seror S.J."/>
            <person name="Serror P."/>
            <person name="Shin B.-S."/>
            <person name="Soldo B."/>
            <person name="Sorokin A."/>
            <person name="Tacconi E."/>
            <person name="Takagi T."/>
            <person name="Takahashi H."/>
            <person name="Takemaru K."/>
            <person name="Takeuchi M."/>
            <person name="Tamakoshi A."/>
            <person name="Tanaka T."/>
            <person name="Terpstra P."/>
            <person name="Tognoni A."/>
            <person name="Tosato V."/>
            <person name="Uchiyama S."/>
            <person name="Vandenbol M."/>
            <person name="Vannier F."/>
            <person name="Vassarotti A."/>
            <person name="Viari A."/>
            <person name="Wambutt R."/>
            <person name="Wedler E."/>
            <person name="Wedler H."/>
            <person name="Weitzenegger T."/>
            <person name="Winters P."/>
            <person name="Wipat A."/>
            <person name="Yamamoto H."/>
            <person name="Yamane K."/>
            <person name="Yasumoto K."/>
            <person name="Yata K."/>
            <person name="Yoshida K."/>
            <person name="Yoshikawa H.-F."/>
            <person name="Zumstein E."/>
            <person name="Yoshikawa H."/>
            <person name="Danchin A."/>
        </authorList>
    </citation>
    <scope>NUCLEOTIDE SEQUENCE [LARGE SCALE GENOMIC DNA]</scope>
    <source>
        <strain>168</strain>
    </source>
</reference>
<comment type="function">
    <text evidence="1">Catalyzes quinol oxidation with the concomitant reduction of oxygen to water. Major component for energy conversion during vegetative growth (By similarity).</text>
</comment>
<comment type="catalytic activity">
    <reaction>
        <text>2 a quinol + O2 = 2 a quinone + 2 H2O</text>
        <dbReference type="Rhea" id="RHEA:55376"/>
        <dbReference type="ChEBI" id="CHEBI:15377"/>
        <dbReference type="ChEBI" id="CHEBI:15379"/>
        <dbReference type="ChEBI" id="CHEBI:24646"/>
        <dbReference type="ChEBI" id="CHEBI:132124"/>
    </reaction>
</comment>
<comment type="subcellular location">
    <subcellularLocation>
        <location evidence="1">Cell membrane</location>
        <topology evidence="1">Multi-pass membrane protein</topology>
    </subcellularLocation>
</comment>
<comment type="similarity">
    <text evidence="3">Belongs to the cytochrome c oxidase subunit 3 family.</text>
</comment>
<protein>
    <recommendedName>
        <fullName>Quinol oxidase subunit 3</fullName>
        <ecNumber>1.10.3.-</ecNumber>
    </recommendedName>
    <alternativeName>
        <fullName>Oxidase aa(3)-600 subunit 3</fullName>
    </alternativeName>
    <alternativeName>
        <fullName>Quinol oxidase aa3-600, subunit QoxC</fullName>
    </alternativeName>
    <alternativeName>
        <fullName>Quinol oxidase polypeptide III</fullName>
    </alternativeName>
</protein>
<sequence>MEHAEHGNSNAPMEYQSETGRLNILGFWIFLGAEIVLFSTLFATFFVLKNRTAGGVLPDELFEVNLVMIMTFLLLISSFTCGIAVHEMRRGSLKGVVIWTIITLLLGAGFVGCEINEFVHYVHEGAALSTSAFWSGFFVLLGTHGTHVTIGIFWITGILIQLKKRGLTPQTSSKIFISSLYWHFLDVVWIFIFTGVYLMGLGGL</sequence>
<proteinExistence type="evidence at protein level"/>
<keyword id="KW-0002">3D-structure</keyword>
<keyword id="KW-1003">Cell membrane</keyword>
<keyword id="KW-0472">Membrane</keyword>
<keyword id="KW-0560">Oxidoreductase</keyword>
<keyword id="KW-1185">Reference proteome</keyword>
<keyword id="KW-0812">Transmembrane</keyword>
<keyword id="KW-1133">Transmembrane helix</keyword>
<evidence type="ECO:0000250" key="1"/>
<evidence type="ECO:0000255" key="2"/>
<evidence type="ECO:0000305" key="3"/>
<dbReference type="EC" id="1.10.3.-"/>
<dbReference type="EMBL" id="M86548">
    <property type="protein sequence ID" value="AAA22688.1"/>
    <property type="molecule type" value="Genomic_DNA"/>
</dbReference>
<dbReference type="EMBL" id="X73124">
    <property type="protein sequence ID" value="CAA51595.1"/>
    <property type="molecule type" value="Genomic_DNA"/>
</dbReference>
<dbReference type="EMBL" id="AL009126">
    <property type="protein sequence ID" value="CAB15841.1"/>
    <property type="molecule type" value="Genomic_DNA"/>
</dbReference>
<dbReference type="PIR" id="C38129">
    <property type="entry name" value="C38129"/>
</dbReference>
<dbReference type="RefSeq" id="NP_391694.1">
    <property type="nucleotide sequence ID" value="NC_000964.3"/>
</dbReference>
<dbReference type="RefSeq" id="WP_003227409.1">
    <property type="nucleotide sequence ID" value="NZ_OZ025638.1"/>
</dbReference>
<dbReference type="PDB" id="6KOB">
    <property type="method" value="X-ray"/>
    <property type="resolution" value="3.60 A"/>
    <property type="chains" value="C/G=1-204"/>
</dbReference>
<dbReference type="PDB" id="6KOC">
    <property type="method" value="X-ray"/>
    <property type="resolution" value="3.80 A"/>
    <property type="chains" value="C/G=1-204"/>
</dbReference>
<dbReference type="PDB" id="6KOE">
    <property type="method" value="X-ray"/>
    <property type="resolution" value="3.75 A"/>
    <property type="chains" value="C/G=1-204"/>
</dbReference>
<dbReference type="PDBsum" id="6KOB"/>
<dbReference type="PDBsum" id="6KOC"/>
<dbReference type="PDBsum" id="6KOE"/>
<dbReference type="SMR" id="P34958"/>
<dbReference type="FunCoup" id="P34958">
    <property type="interactions" value="156"/>
</dbReference>
<dbReference type="STRING" id="224308.BSU38150"/>
<dbReference type="jPOST" id="P34958"/>
<dbReference type="PaxDb" id="224308-BSU38150"/>
<dbReference type="EnsemblBacteria" id="CAB15841">
    <property type="protein sequence ID" value="CAB15841"/>
    <property type="gene ID" value="BSU_38150"/>
</dbReference>
<dbReference type="GeneID" id="937299"/>
<dbReference type="KEGG" id="bsu:BSU38150"/>
<dbReference type="PATRIC" id="fig|224308.179.peg.4129"/>
<dbReference type="eggNOG" id="COG1845">
    <property type="taxonomic scope" value="Bacteria"/>
</dbReference>
<dbReference type="InParanoid" id="P34958"/>
<dbReference type="OrthoDB" id="9810850at2"/>
<dbReference type="PhylomeDB" id="P34958"/>
<dbReference type="BioCyc" id="BSUB:BSU38150-MONOMER"/>
<dbReference type="BioCyc" id="MetaCyc:BSU38150-MONOMER"/>
<dbReference type="Proteomes" id="UP000001570">
    <property type="component" value="Chromosome"/>
</dbReference>
<dbReference type="GO" id="GO:0005886">
    <property type="term" value="C:plasma membrane"/>
    <property type="evidence" value="ECO:0007669"/>
    <property type="project" value="UniProtKB-SubCell"/>
</dbReference>
<dbReference type="GO" id="GO:0004129">
    <property type="term" value="F:cytochrome-c oxidase activity"/>
    <property type="evidence" value="ECO:0007669"/>
    <property type="project" value="InterPro"/>
</dbReference>
<dbReference type="GO" id="GO:0016682">
    <property type="term" value="F:oxidoreductase activity, acting on diphenols and related substances as donors, oxygen as acceptor"/>
    <property type="evidence" value="ECO:0000250"/>
    <property type="project" value="UniProtKB"/>
</dbReference>
<dbReference type="GO" id="GO:0019646">
    <property type="term" value="P:aerobic electron transport chain"/>
    <property type="evidence" value="ECO:0007669"/>
    <property type="project" value="InterPro"/>
</dbReference>
<dbReference type="GO" id="GO:0009060">
    <property type="term" value="P:aerobic respiration"/>
    <property type="evidence" value="ECO:0000318"/>
    <property type="project" value="GO_Central"/>
</dbReference>
<dbReference type="GO" id="GO:0042773">
    <property type="term" value="P:ATP synthesis coupled electron transport"/>
    <property type="evidence" value="ECO:0000250"/>
    <property type="project" value="UniProtKB"/>
</dbReference>
<dbReference type="CDD" id="cd02863">
    <property type="entry name" value="Ubiquinol_oxidase_III"/>
    <property type="match status" value="1"/>
</dbReference>
<dbReference type="FunFam" id="1.20.120.80:FF:000001">
    <property type="entry name" value="Cytochrome (Ubi)quinol oxidase subunit III"/>
    <property type="match status" value="1"/>
</dbReference>
<dbReference type="Gene3D" id="1.20.120.80">
    <property type="entry name" value="Cytochrome c oxidase, subunit III, four-helix bundle"/>
    <property type="match status" value="1"/>
</dbReference>
<dbReference type="InterPro" id="IPR024791">
    <property type="entry name" value="Cyt_c/ubiquinol_Oxase_su3"/>
</dbReference>
<dbReference type="InterPro" id="IPR000298">
    <property type="entry name" value="Cyt_c_oxidase-like_su3"/>
</dbReference>
<dbReference type="InterPro" id="IPR035973">
    <property type="entry name" value="Cyt_c_oxidase_su3-like_sf"/>
</dbReference>
<dbReference type="InterPro" id="IPR013833">
    <property type="entry name" value="Cyt_c_oxidase_su3_a-hlx"/>
</dbReference>
<dbReference type="InterPro" id="IPR014246">
    <property type="entry name" value="QoxC"/>
</dbReference>
<dbReference type="InterPro" id="IPR033946">
    <property type="entry name" value="Ubiquinol_oxase_su3_dom"/>
</dbReference>
<dbReference type="NCBIfam" id="TIGR02897">
    <property type="entry name" value="QoxC"/>
    <property type="match status" value="1"/>
</dbReference>
<dbReference type="PANTHER" id="PTHR11403:SF2">
    <property type="entry name" value="CYTOCHROME BO(3) UBIQUINOL OXIDASE SUBUNIT 3"/>
    <property type="match status" value="1"/>
</dbReference>
<dbReference type="PANTHER" id="PTHR11403">
    <property type="entry name" value="CYTOCHROME C OXIDASE SUBUNIT III"/>
    <property type="match status" value="1"/>
</dbReference>
<dbReference type="Pfam" id="PF00510">
    <property type="entry name" value="COX3"/>
    <property type="match status" value="1"/>
</dbReference>
<dbReference type="SUPFAM" id="SSF81452">
    <property type="entry name" value="Cytochrome c oxidase subunit III-like"/>
    <property type="match status" value="1"/>
</dbReference>
<dbReference type="PROSITE" id="PS50253">
    <property type="entry name" value="COX3"/>
    <property type="match status" value="1"/>
</dbReference>
<accession>P34958</accession>
<name>QOX3_BACSU</name>
<gene>
    <name type="primary">qoxC</name>
    <name type="ordered locus">BSU38150</name>
    <name type="ORF">ipa-39d</name>
</gene>
<feature type="chain" id="PRO_0000183892" description="Quinol oxidase subunit 3">
    <location>
        <begin position="1"/>
        <end position="204"/>
    </location>
</feature>
<feature type="transmembrane region" description="Helical" evidence="2">
    <location>
        <begin position="27"/>
        <end position="47"/>
    </location>
</feature>
<feature type="transmembrane region" description="Helical" evidence="2">
    <location>
        <begin position="66"/>
        <end position="86"/>
    </location>
</feature>
<feature type="transmembrane region" description="Helical" evidence="2">
    <location>
        <begin position="95"/>
        <end position="115"/>
    </location>
</feature>
<feature type="transmembrane region" description="Helical" evidence="2">
    <location>
        <begin position="118"/>
        <end position="138"/>
    </location>
</feature>
<feature type="transmembrane region" description="Helical" evidence="2">
    <location>
        <begin position="140"/>
        <end position="160"/>
    </location>
</feature>
<feature type="transmembrane region" description="Helical" evidence="2">
    <location>
        <begin position="184"/>
        <end position="204"/>
    </location>
</feature>